<comment type="function">
    <text evidence="5 6">Dihydro-ML-236C carboxylate monooxygenase; part of the gene cluster that mediates the biosynthesis of compactin, also known as mevastatin or ML-236B, and which acts as a potent competitive inhibitor of HMG-CoA reductase (PubMed:12172803, PubMed:12242508). Compactin biosynthesis is performed in two stages (PubMed:12172803). The first stage is catalyzed by the nonaketide synthase mlcA, which belongs to type I polyketide synthases and catalyzes the iterative nine-step formation of the polyketide (PubMed:12172803). This PKS stage is completed by the action of dehydrogenase mlcG, which catalyzes the NADPH-dependent reduction of the unsaturated tetra-, penta- and heptaketide intermediates that arise during the mlcA-mediated biosynthesis of the nonaketide chain and leads to dihydro-ML-236C carboxylate (PubMed:12172803). Covalently bound dihydro-ML-236C carboxylate is released from mlcA by the mlcF esterase (PubMed:12172803). Conversion of dihydro-ML-236C carboxylate into ML-236A carboxylate is subsequently performed with the participation of molecular oxygen and P450 monoogygenase mlcC (PubMed:12172803). Finally, mlcH performs the conversion of ML-236A carboxylate to ML-236B/compactin carboxylate through the addition of the side-chain diketide moiety produced by the diketide synthase mlcB (PubMed:12172803).</text>
</comment>
<comment type="catalytic activity">
    <reaction evidence="10">
        <text>dihydro-ML-236C carboxylate + reduced [NADPH--hemoprotein reductase] + O2 = ML-236C carboxylate + oxidized [NADPH--hemoprotein reductase] + 2 H2O + H(+)</text>
        <dbReference type="Rhea" id="RHEA:57620"/>
        <dbReference type="Rhea" id="RHEA-COMP:11964"/>
        <dbReference type="Rhea" id="RHEA-COMP:11965"/>
        <dbReference type="ChEBI" id="CHEBI:15377"/>
        <dbReference type="ChEBI" id="CHEBI:15378"/>
        <dbReference type="ChEBI" id="CHEBI:15379"/>
        <dbReference type="ChEBI" id="CHEBI:57618"/>
        <dbReference type="ChEBI" id="CHEBI:58210"/>
        <dbReference type="ChEBI" id="CHEBI:142045"/>
        <dbReference type="ChEBI" id="CHEBI:142047"/>
    </reaction>
</comment>
<comment type="catalytic activity">
    <reaction evidence="10">
        <text>ML-236C carboxylate + reduced [NADPH--hemoprotein reductase] + O2 = ML-236A carboxylate + oxidized [NADPH--hemoprotein reductase] + H2O + H(+)</text>
        <dbReference type="Rhea" id="RHEA:57632"/>
        <dbReference type="Rhea" id="RHEA-COMP:11964"/>
        <dbReference type="Rhea" id="RHEA-COMP:11965"/>
        <dbReference type="ChEBI" id="CHEBI:15377"/>
        <dbReference type="ChEBI" id="CHEBI:15378"/>
        <dbReference type="ChEBI" id="CHEBI:15379"/>
        <dbReference type="ChEBI" id="CHEBI:57618"/>
        <dbReference type="ChEBI" id="CHEBI:58210"/>
        <dbReference type="ChEBI" id="CHEBI:142047"/>
        <dbReference type="ChEBI" id="CHEBI:142048"/>
    </reaction>
</comment>
<comment type="cofactor">
    <cofactor evidence="1">
        <name>heme</name>
        <dbReference type="ChEBI" id="CHEBI:30413"/>
    </cofactor>
    <text evidence="1">Binds 1 heme group per subunit.</text>
</comment>
<comment type="pathway">
    <text evidence="10">Polyketide biosynthesis.</text>
</comment>
<comment type="subcellular location">
    <subcellularLocation>
        <location evidence="2">Endoplasmic reticulum membrane</location>
        <topology evidence="2">Single-pass type II membrane protein</topology>
    </subcellularLocation>
</comment>
<comment type="induction">
    <text evidence="5 7 8">Expression is induced at the beginning of the stationary phase, which is consistent with the timing of compactin production (PubMed:12172803). Expression is controlled by the ML-236B/compactin cluster transcription regulator mlcR (PubMed:12436257, PubMed:18667169).</text>
</comment>
<comment type="biotechnology">
    <text evidence="4">Compactin (also known as mevastatin or ML-236B) and the intermediary metabolites Ml-236C and ML-236A are inhibitors of HMG-CoA reductase involved in cholesterogenesis (PubMed:1010803). Their hypocholesterolemic activity might be useful for lowering cholesterol levels in the blood and reduce artherosclerosis and coronary heart disease (PubMed:1010803).</text>
</comment>
<comment type="similarity">
    <text evidence="10">Belongs to the cytochrome P450 family.</text>
</comment>
<gene>
    <name evidence="9" type="primary">mlcC</name>
</gene>
<reference key="1">
    <citation type="journal article" date="2002" name="Mol. Genet. Genomics">
        <title>Molecular cloning and characterization of an ML-236B (compactin) biosynthetic gene cluster in Penicillium citrinum.</title>
        <authorList>
            <person name="Abe Y."/>
            <person name="Suzuki T."/>
            <person name="Ono C."/>
            <person name="Iwamoto K."/>
            <person name="Hosobuchi M."/>
            <person name="Yoshikawa H."/>
        </authorList>
    </citation>
    <scope>NUCLEOTIDE SEQUENCE [GENOMIC DNA]</scope>
    <scope>INDUCTION</scope>
    <scope>FUNCTION</scope>
</reference>
<reference key="2">
    <citation type="journal article" date="2002" name="Mol. Genet. Genomics">
        <title>Effect of increased dosage of the ML-236B (compactin) biosynthetic gene cluster on ML-236B production in Penicillium citrinum.</title>
        <authorList>
            <person name="Abe Y."/>
            <person name="Suzuki T."/>
            <person name="Mizuno T."/>
            <person name="Ono C."/>
            <person name="Iwamoto K."/>
            <person name="Hosobuchi M."/>
            <person name="Yoshikawa H."/>
        </authorList>
    </citation>
    <scope>FUNCTION</scope>
</reference>
<reference key="3">
    <citation type="journal article" date="1976" name="J. Antibiot.">
        <title>ML-236A, ML-236B, and ML-236C, new inhibitors of cholesterogenesis produced by Penicillium citrinium.</title>
        <authorList>
            <person name="Endo A."/>
            <person name="Kuroda M."/>
            <person name="Tsujita Y."/>
        </authorList>
    </citation>
    <scope>BIOTECHNOLOGY</scope>
</reference>
<reference key="4">
    <citation type="journal article" date="2002" name="Mol. Genet. Genomics">
        <title>Functional analysis of mlcR, a regulatory gene for ML-236B (compactin) biosynthesis in Penicillium citrinum.</title>
        <authorList>
            <person name="Abe Y."/>
            <person name="Ono C."/>
            <person name="Hosobuchi M."/>
            <person name="Yoshikawa H."/>
        </authorList>
    </citation>
    <scope>INDUCTION</scope>
</reference>
<reference key="5">
    <citation type="journal article" date="2008" name="Fungal Genet. Biol.">
        <title>Identification of the specific sequence recognized by Penicillium citrinum MlcR, a GAL4-type transcriptional activator of ML-236B (compactin) biosynthetic genes.</title>
        <authorList>
            <person name="Baba S."/>
            <person name="Nihira T."/>
            <person name="Hosobuchi M."/>
        </authorList>
    </citation>
    <scope>INDUCTION</scope>
</reference>
<feature type="chain" id="PRO_0000436284" description="Dihydro-ML-236C monooxygenase mlcC">
    <location>
        <begin position="1"/>
        <end position="518"/>
    </location>
</feature>
<feature type="topological domain" description="Cytoplasmic" evidence="10">
    <location>
        <begin position="1"/>
        <end position="31"/>
    </location>
</feature>
<feature type="transmembrane region" description="Helical; Signal-anchor for type II membrane protein" evidence="3">
    <location>
        <begin position="32"/>
        <end position="48"/>
    </location>
</feature>
<feature type="topological domain" description="Lumenal" evidence="10">
    <location>
        <begin position="49"/>
        <end position="518"/>
    </location>
</feature>
<feature type="binding site" description="axial binding residue" evidence="1">
    <location>
        <position position="454"/>
    </location>
    <ligand>
        <name>heme</name>
        <dbReference type="ChEBI" id="CHEBI:30413"/>
    </ligand>
    <ligandPart>
        <name>Fe</name>
        <dbReference type="ChEBI" id="CHEBI:18248"/>
    </ligandPart>
</feature>
<keyword id="KW-0256">Endoplasmic reticulum</keyword>
<keyword id="KW-0349">Heme</keyword>
<keyword id="KW-0408">Iron</keyword>
<keyword id="KW-0472">Membrane</keyword>
<keyword id="KW-0479">Metal-binding</keyword>
<keyword id="KW-0503">Monooxygenase</keyword>
<keyword id="KW-0560">Oxidoreductase</keyword>
<keyword id="KW-0735">Signal-anchor</keyword>
<keyword id="KW-0812">Transmembrane</keyword>
<keyword id="KW-1133">Transmembrane helix</keyword>
<protein>
    <recommendedName>
        <fullName evidence="10">Dihydro-ML-236C monooxygenase mlcC</fullName>
        <ecNumber evidence="10">1.14.14.-</ecNumber>
    </recommendedName>
    <alternativeName>
        <fullName evidence="9">Compactin biosynthesis protein C</fullName>
    </alternativeName>
    <alternativeName>
        <fullName evidence="2">DihydroML-236B hydroxylase</fullName>
    </alternativeName>
</protein>
<sequence>MLGQVLLTVESYQWVSTPQALVAVAVLLSLIAYRLRGRQSELQVYNPKKWWELTTMRARQDFDTYGPSWIEAWFSKNDKPLRFIVDSGYCTILPSSMADEFRKIKDMCMYKFLADDFHSHLPGFDGFKEICQDAHLVNKVVLNQLQTQAPKYTKPLATLADATIAKLFGKSEEWQTAPVYSNGLDLVTRTVTLIMVGDKICHNEEWLDIAKNHAVSVAVQARQLRVWPMLLRPLAHWFQPQGRKLRDQVRRARKIIDPEIQRRRAEKAACVAKGVQPPQYVDTMQWFEDTADGRWYDVAGAQLAMDFAGIYASTDLFVGALVDIARHPDLIQPLRQEIRTVIGEGGWTPASLFKLKLLDSCMKETQRIKPVECATMRSTALRDITLSNGLFIPKGELAAVAADRMNNPDVWENPENYDPYRFMRMREDPDKAFTAQLENTNGDHIGFGWNPRACPGRFFASKEIKILLAHILIQYDVKPVPGDDDKYYRHAFSVRMHPTTKLMVRRRNEDIPLPHDRC</sequence>
<proteinExistence type="evidence at protein level"/>
<accession>Q8J0F6</accession>
<name>MLCC_PENCI</name>
<dbReference type="EC" id="1.14.14.-" evidence="10"/>
<dbReference type="EMBL" id="AB072893">
    <property type="protein sequence ID" value="BAC20565.1"/>
    <property type="molecule type" value="Genomic_DNA"/>
</dbReference>
<dbReference type="SMR" id="Q8J0F6"/>
<dbReference type="GO" id="GO:0005789">
    <property type="term" value="C:endoplasmic reticulum membrane"/>
    <property type="evidence" value="ECO:0007669"/>
    <property type="project" value="UniProtKB-SubCell"/>
</dbReference>
<dbReference type="GO" id="GO:0020037">
    <property type="term" value="F:heme binding"/>
    <property type="evidence" value="ECO:0007669"/>
    <property type="project" value="InterPro"/>
</dbReference>
<dbReference type="GO" id="GO:0005506">
    <property type="term" value="F:iron ion binding"/>
    <property type="evidence" value="ECO:0007669"/>
    <property type="project" value="InterPro"/>
</dbReference>
<dbReference type="GO" id="GO:0004497">
    <property type="term" value="F:monooxygenase activity"/>
    <property type="evidence" value="ECO:0007669"/>
    <property type="project" value="UniProtKB-KW"/>
</dbReference>
<dbReference type="GO" id="GO:0016705">
    <property type="term" value="F:oxidoreductase activity, acting on paired donors, with incorporation or reduction of molecular oxygen"/>
    <property type="evidence" value="ECO:0007669"/>
    <property type="project" value="InterPro"/>
</dbReference>
<dbReference type="GO" id="GO:0043386">
    <property type="term" value="P:mycotoxin biosynthetic process"/>
    <property type="evidence" value="ECO:0007669"/>
    <property type="project" value="UniProtKB-ARBA"/>
</dbReference>
<dbReference type="CDD" id="cd11041">
    <property type="entry name" value="CYP503A1-like"/>
    <property type="match status" value="1"/>
</dbReference>
<dbReference type="Gene3D" id="1.10.630.10">
    <property type="entry name" value="Cytochrome P450"/>
    <property type="match status" value="1"/>
</dbReference>
<dbReference type="InterPro" id="IPR001128">
    <property type="entry name" value="Cyt_P450"/>
</dbReference>
<dbReference type="InterPro" id="IPR002401">
    <property type="entry name" value="Cyt_P450_E_grp-I"/>
</dbReference>
<dbReference type="InterPro" id="IPR036396">
    <property type="entry name" value="Cyt_P450_sf"/>
</dbReference>
<dbReference type="PANTHER" id="PTHR46206">
    <property type="entry name" value="CYTOCHROME P450"/>
    <property type="match status" value="1"/>
</dbReference>
<dbReference type="PANTHER" id="PTHR46206:SF2">
    <property type="entry name" value="CYTOCHROME P450 MONOOXYGENASE AUSG-RELATED"/>
    <property type="match status" value="1"/>
</dbReference>
<dbReference type="Pfam" id="PF00067">
    <property type="entry name" value="p450"/>
    <property type="match status" value="1"/>
</dbReference>
<dbReference type="PRINTS" id="PR00463">
    <property type="entry name" value="EP450I"/>
</dbReference>
<dbReference type="PRINTS" id="PR00385">
    <property type="entry name" value="P450"/>
</dbReference>
<dbReference type="SUPFAM" id="SSF48264">
    <property type="entry name" value="Cytochrome P450"/>
    <property type="match status" value="1"/>
</dbReference>
<organism evidence="11">
    <name type="scientific">Penicillium citrinum</name>
    <dbReference type="NCBI Taxonomy" id="5077"/>
    <lineage>
        <taxon>Eukaryota</taxon>
        <taxon>Fungi</taxon>
        <taxon>Dikarya</taxon>
        <taxon>Ascomycota</taxon>
        <taxon>Pezizomycotina</taxon>
        <taxon>Eurotiomycetes</taxon>
        <taxon>Eurotiomycetidae</taxon>
        <taxon>Eurotiales</taxon>
        <taxon>Aspergillaceae</taxon>
        <taxon>Penicillium</taxon>
    </lineage>
</organism>
<evidence type="ECO:0000250" key="1">
    <source>
        <dbReference type="UniProtKB" id="Q02928"/>
    </source>
</evidence>
<evidence type="ECO:0000250" key="2">
    <source>
        <dbReference type="UniProtKB" id="Q9Y7C8"/>
    </source>
</evidence>
<evidence type="ECO:0000255" key="3"/>
<evidence type="ECO:0000269" key="4">
    <source>
    </source>
</evidence>
<evidence type="ECO:0000269" key="5">
    <source>
    </source>
</evidence>
<evidence type="ECO:0000269" key="6">
    <source>
    </source>
</evidence>
<evidence type="ECO:0000269" key="7">
    <source>
    </source>
</evidence>
<evidence type="ECO:0000269" key="8">
    <source>
    </source>
</evidence>
<evidence type="ECO:0000303" key="9">
    <source>
    </source>
</evidence>
<evidence type="ECO:0000305" key="10"/>
<evidence type="ECO:0000312" key="11">
    <source>
        <dbReference type="EMBL" id="BAC20565.1"/>
    </source>
</evidence>